<gene>
    <name evidence="9" type="primary">oma1</name>
    <name evidence="8" type="ORF">si:ch73-215a11.1</name>
</gene>
<reference key="1">
    <citation type="journal article" date="2013" name="Nature">
        <title>The zebrafish reference genome sequence and its relationship to the human genome.</title>
        <authorList>
            <person name="Howe K."/>
            <person name="Clark M.D."/>
            <person name="Torroja C.F."/>
            <person name="Torrance J."/>
            <person name="Berthelot C."/>
            <person name="Muffato M."/>
            <person name="Collins J.E."/>
            <person name="Humphray S."/>
            <person name="McLaren K."/>
            <person name="Matthews L."/>
            <person name="McLaren S."/>
            <person name="Sealy I."/>
            <person name="Caccamo M."/>
            <person name="Churcher C."/>
            <person name="Scott C."/>
            <person name="Barrett J.C."/>
            <person name="Koch R."/>
            <person name="Rauch G.J."/>
            <person name="White S."/>
            <person name="Chow W."/>
            <person name="Kilian B."/>
            <person name="Quintais L.T."/>
            <person name="Guerra-Assuncao J.A."/>
            <person name="Zhou Y."/>
            <person name="Gu Y."/>
            <person name="Yen J."/>
            <person name="Vogel J.H."/>
            <person name="Eyre T."/>
            <person name="Redmond S."/>
            <person name="Banerjee R."/>
            <person name="Chi J."/>
            <person name="Fu B."/>
            <person name="Langley E."/>
            <person name="Maguire S.F."/>
            <person name="Laird G.K."/>
            <person name="Lloyd D."/>
            <person name="Kenyon E."/>
            <person name="Donaldson S."/>
            <person name="Sehra H."/>
            <person name="Almeida-King J."/>
            <person name="Loveland J."/>
            <person name="Trevanion S."/>
            <person name="Jones M."/>
            <person name="Quail M."/>
            <person name="Willey D."/>
            <person name="Hunt A."/>
            <person name="Burton J."/>
            <person name="Sims S."/>
            <person name="McLay K."/>
            <person name="Plumb B."/>
            <person name="Davis J."/>
            <person name="Clee C."/>
            <person name="Oliver K."/>
            <person name="Clark R."/>
            <person name="Riddle C."/>
            <person name="Elliot D."/>
            <person name="Threadgold G."/>
            <person name="Harden G."/>
            <person name="Ware D."/>
            <person name="Begum S."/>
            <person name="Mortimore B."/>
            <person name="Kerry G."/>
            <person name="Heath P."/>
            <person name="Phillimore B."/>
            <person name="Tracey A."/>
            <person name="Corby N."/>
            <person name="Dunn M."/>
            <person name="Johnson C."/>
            <person name="Wood J."/>
            <person name="Clark S."/>
            <person name="Pelan S."/>
            <person name="Griffiths G."/>
            <person name="Smith M."/>
            <person name="Glithero R."/>
            <person name="Howden P."/>
            <person name="Barker N."/>
            <person name="Lloyd C."/>
            <person name="Stevens C."/>
            <person name="Harley J."/>
            <person name="Holt K."/>
            <person name="Panagiotidis G."/>
            <person name="Lovell J."/>
            <person name="Beasley H."/>
            <person name="Henderson C."/>
            <person name="Gordon D."/>
            <person name="Auger K."/>
            <person name="Wright D."/>
            <person name="Collins J."/>
            <person name="Raisen C."/>
            <person name="Dyer L."/>
            <person name="Leung K."/>
            <person name="Robertson L."/>
            <person name="Ambridge K."/>
            <person name="Leongamornlert D."/>
            <person name="McGuire S."/>
            <person name="Gilderthorp R."/>
            <person name="Griffiths C."/>
            <person name="Manthravadi D."/>
            <person name="Nichol S."/>
            <person name="Barker G."/>
            <person name="Whitehead S."/>
            <person name="Kay M."/>
            <person name="Brown J."/>
            <person name="Murnane C."/>
            <person name="Gray E."/>
            <person name="Humphries M."/>
            <person name="Sycamore N."/>
            <person name="Barker D."/>
            <person name="Saunders D."/>
            <person name="Wallis J."/>
            <person name="Babbage A."/>
            <person name="Hammond S."/>
            <person name="Mashreghi-Mohammadi M."/>
            <person name="Barr L."/>
            <person name="Martin S."/>
            <person name="Wray P."/>
            <person name="Ellington A."/>
            <person name="Matthews N."/>
            <person name="Ellwood M."/>
            <person name="Woodmansey R."/>
            <person name="Clark G."/>
            <person name="Cooper J."/>
            <person name="Tromans A."/>
            <person name="Grafham D."/>
            <person name="Skuce C."/>
            <person name="Pandian R."/>
            <person name="Andrews R."/>
            <person name="Harrison E."/>
            <person name="Kimberley A."/>
            <person name="Garnett J."/>
            <person name="Fosker N."/>
            <person name="Hall R."/>
            <person name="Garner P."/>
            <person name="Kelly D."/>
            <person name="Bird C."/>
            <person name="Palmer S."/>
            <person name="Gehring I."/>
            <person name="Berger A."/>
            <person name="Dooley C.M."/>
            <person name="Ersan-Urun Z."/>
            <person name="Eser C."/>
            <person name="Geiger H."/>
            <person name="Geisler M."/>
            <person name="Karotki L."/>
            <person name="Kirn A."/>
            <person name="Konantz J."/>
            <person name="Konantz M."/>
            <person name="Oberlander M."/>
            <person name="Rudolph-Geiger S."/>
            <person name="Teucke M."/>
            <person name="Lanz C."/>
            <person name="Raddatz G."/>
            <person name="Osoegawa K."/>
            <person name="Zhu B."/>
            <person name="Rapp A."/>
            <person name="Widaa S."/>
            <person name="Langford C."/>
            <person name="Yang F."/>
            <person name="Schuster S.C."/>
            <person name="Carter N.P."/>
            <person name="Harrow J."/>
            <person name="Ning Z."/>
            <person name="Herrero J."/>
            <person name="Searle S.M."/>
            <person name="Enright A."/>
            <person name="Geisler R."/>
            <person name="Plasterk R.H."/>
            <person name="Lee C."/>
            <person name="Westerfield M."/>
            <person name="de Jong P.J."/>
            <person name="Zon L.I."/>
            <person name="Postlethwait J.H."/>
            <person name="Nusslein-Volhard C."/>
            <person name="Hubbard T.J."/>
            <person name="Roest Crollius H."/>
            <person name="Rogers J."/>
            <person name="Stemple D.L."/>
        </authorList>
    </citation>
    <scope>NUCLEOTIDE SEQUENCE [LARGE SCALE GENOMIC DNA]</scope>
    <source>
        <strain>Tuebingen</strain>
    </source>
</reference>
<reference key="2">
    <citation type="journal article" date="2015" name="Sci. Rep.">
        <title>metalloprotease OMA1 fine-tunes mitochondrial bioenergetic function and respiratory supercomplex stability.</title>
        <authorList>
            <person name="Bohovych I."/>
            <person name="Fernandez M.R."/>
            <person name="Rahn J.J."/>
            <person name="Stackley K.D."/>
            <person name="Bestman J.E."/>
            <person name="Anandhan A."/>
            <person name="Franco R."/>
            <person name="Claypool S.M."/>
            <person name="Lewis R.E."/>
            <person name="Chan S.S."/>
            <person name="Khalimonchuk O."/>
        </authorList>
    </citation>
    <scope>FUNCTION</scope>
    <scope>DISRUPTION PHENOTYPE</scope>
</reference>
<sequence>MQQTCIRLVKLDMLSTLTRFRTHSAIRCCAQRLFHCRPSLFISARTYFIKIDSSSLPKLKGSVSFSASCVSLGSSRLGLCSSSFKTGAPAALRAPVVFQRTRGFHTSGRRRALPALPLLWMVLKPLQKIMAIILGRSIRKWWVALPANKKQLFREWSWRRRWHFLGAGTGLLFIASLFFFTHLDESPITGRTRLLVFSRKNFRELAQFNADAFMEEFKDSLIASSDPRHKVVEQVVQILAQRNQDIAEISAVPWTVHVVDSPTMNAFVLPNGEIFVFTGMLNAVTDIHQLTFILGHEMAHALIGHAAEQASLSHVVELLSLVLLTAIWAVCPRDSLAALGHWIQGKLVQFLFDRPFSRKLEAEADQVGLQMAAKACADVRAGPVFWEQMEIFDQLSGQPTMPEWLSTHPSHQNRVRQLDRLIPEALELRARCNCPELPKTDPRVVFNEAVRLVLEGKKEQMLEKEEKNGKTQTGDMFP</sequence>
<proteinExistence type="inferred from homology"/>
<comment type="function">
    <text evidence="3 4 7">Metalloprotease that is part of the quality control system in the inner membrane of mitochondria. Activated in response to various mitochondrial stress, leading to the proteolytic cleavage of target proteins, such as opa1 and dele1 (By similarity). Involved in the fusion of the mitochondrial inner membranes by mediating cleavage of opa1 at S1 position, generating the soluble opa1 (S-opa1), which cooperates with the membrane form (L-opa1) to coordinate the fusion of mitochondrial inner membranes (By similarity). Following stress conditions that induce loss of mitochondrial membrane potential, mediates cleavage of opa1, leading to excess production of soluble opa1 (S-opa1) and negative regulation of mitochondrial fusion (By similarity). Also acts as an activator of the integrated stress response (ISR): in response to mitochondrial stress, mediates cleavage of dele1 to generate the processed form of dele1 (S-DELE1), which translocates to the cytosol and activates eif2ak1/hri to trigger the ISR (By similarity). Required for the stability of the respiratory supercomplexes (PubMed:26365306).</text>
</comment>
<comment type="cofactor">
    <cofactor evidence="1">
        <name>Zn(2+)</name>
        <dbReference type="ChEBI" id="CHEBI:29105"/>
    </cofactor>
    <text evidence="1">Binds 1 zinc ion per subunit.</text>
</comment>
<comment type="activity regulation">
    <text evidence="4">Protease activity is activated upon autocatalytic cleavage in response to mitochondrial depolarization.</text>
</comment>
<comment type="subunit">
    <text evidence="4">Homooligomer.</text>
</comment>
<comment type="subcellular location">
    <subcellularLocation>
        <location evidence="4">Mitochondrion inner membrane</location>
        <topology evidence="4">Single-pass membrane protein</topology>
    </subcellularLocation>
</comment>
<comment type="domain">
    <text evidence="4">The stress-sensor region regulates proteolysis and activation.</text>
</comment>
<comment type="PTM">
    <text evidence="4">Autocatalytically cleaved in response to mitochondrial depolarization both at the N-terminus and C-terminus to generate the short active form (S-OMA1). The S-OMA1 form is unstable.</text>
</comment>
<comment type="PTM">
    <text evidence="2 3">May form a redox-dependent disulfide bond (By similarity). Exists in a semi-oxidized state and is activated by prolonged hypoxia (By similarity).</text>
</comment>
<comment type="disruption phenotype">
    <text evidence="7">Morpholino knockdown of the protein causes developmental defects, such as pericardial edema, smaller eyes and shorter body length (PubMed:26365306). Bioenergetics defects are observed in dells (PubMed:26365306).</text>
</comment>
<comment type="similarity">
    <text evidence="10">Belongs to the peptidase M48 family.</text>
</comment>
<name>OMA1_DANRE</name>
<protein>
    <recommendedName>
        <fullName evidence="10">Metalloendopeptidase OMA1, mitochondrial</fullName>
        <shortName evidence="9">zfoma1</shortName>
        <ecNumber evidence="3">3.4.24.-</ecNumber>
    </recommendedName>
    <alternativeName>
        <fullName evidence="3">Overlapping with the m-AAA protease 1 homolog</fullName>
    </alternativeName>
</protein>
<accession>E9QBI7</accession>
<organism>
    <name type="scientific">Danio rerio</name>
    <name type="common">Zebrafish</name>
    <name type="synonym">Brachydanio rerio</name>
    <dbReference type="NCBI Taxonomy" id="7955"/>
    <lineage>
        <taxon>Eukaryota</taxon>
        <taxon>Metazoa</taxon>
        <taxon>Chordata</taxon>
        <taxon>Craniata</taxon>
        <taxon>Vertebrata</taxon>
        <taxon>Euteleostomi</taxon>
        <taxon>Actinopterygii</taxon>
        <taxon>Neopterygii</taxon>
        <taxon>Teleostei</taxon>
        <taxon>Ostariophysi</taxon>
        <taxon>Cypriniformes</taxon>
        <taxon>Danionidae</taxon>
        <taxon>Danioninae</taxon>
        <taxon>Danio</taxon>
    </lineage>
</organism>
<dbReference type="EC" id="3.4.24.-" evidence="3"/>
<dbReference type="EMBL" id="CU856363">
    <property type="status" value="NOT_ANNOTATED_CDS"/>
    <property type="molecule type" value="Genomic_DNA"/>
</dbReference>
<dbReference type="FunCoup" id="E9QBI7">
    <property type="interactions" value="145"/>
</dbReference>
<dbReference type="STRING" id="7955.ENSDARP00000119103"/>
<dbReference type="PaxDb" id="7955-ENSDARP00000119103"/>
<dbReference type="AGR" id="ZFIN:ZDB-GENE-091204-124"/>
<dbReference type="ZFIN" id="ZDB-GENE-091204-124">
    <property type="gene designation" value="oma1"/>
</dbReference>
<dbReference type="eggNOG" id="KOG2661">
    <property type="taxonomic scope" value="Eukaryota"/>
</dbReference>
<dbReference type="InParanoid" id="E9QBI7"/>
<dbReference type="Reactome" id="R-DRE-169911">
    <property type="pathway name" value="Regulation of Apoptosis"/>
</dbReference>
<dbReference type="Reactome" id="R-DRE-9840373">
    <property type="pathway name" value="Cellular response to mitochondrial stress"/>
</dbReference>
<dbReference type="PRO" id="PR:E9QBI7"/>
<dbReference type="Proteomes" id="UP000000437">
    <property type="component" value="Unplaced"/>
</dbReference>
<dbReference type="GO" id="GO:0005743">
    <property type="term" value="C:mitochondrial inner membrane"/>
    <property type="evidence" value="ECO:0000250"/>
    <property type="project" value="UniProtKB"/>
</dbReference>
<dbReference type="GO" id="GO:0031966">
    <property type="term" value="C:mitochondrial membrane"/>
    <property type="evidence" value="ECO:0000250"/>
    <property type="project" value="UniProtKB"/>
</dbReference>
<dbReference type="GO" id="GO:0046872">
    <property type="term" value="F:metal ion binding"/>
    <property type="evidence" value="ECO:0007669"/>
    <property type="project" value="UniProtKB-KW"/>
</dbReference>
<dbReference type="GO" id="GO:0004222">
    <property type="term" value="F:metalloendopeptidase activity"/>
    <property type="evidence" value="ECO:0000250"/>
    <property type="project" value="UniProtKB"/>
</dbReference>
<dbReference type="GO" id="GO:0002024">
    <property type="term" value="P:diet induced thermogenesis"/>
    <property type="evidence" value="ECO:0000250"/>
    <property type="project" value="UniProtKB"/>
</dbReference>
<dbReference type="GO" id="GO:0097009">
    <property type="term" value="P:energy homeostasis"/>
    <property type="evidence" value="ECO:0000250"/>
    <property type="project" value="UniProtKB"/>
</dbReference>
<dbReference type="GO" id="GO:0006006">
    <property type="term" value="P:glucose metabolic process"/>
    <property type="evidence" value="ECO:0000250"/>
    <property type="project" value="UniProtKB"/>
</dbReference>
<dbReference type="GO" id="GO:0140468">
    <property type="term" value="P:HRI-mediated signaling"/>
    <property type="evidence" value="ECO:0000250"/>
    <property type="project" value="UniProtKB"/>
</dbReference>
<dbReference type="GO" id="GO:0140467">
    <property type="term" value="P:integrated stress response signaling"/>
    <property type="evidence" value="ECO:0000250"/>
    <property type="project" value="UniProtKB"/>
</dbReference>
<dbReference type="GO" id="GO:0006629">
    <property type="term" value="P:lipid metabolic process"/>
    <property type="evidence" value="ECO:0000250"/>
    <property type="project" value="UniProtKB"/>
</dbReference>
<dbReference type="GO" id="GO:0034982">
    <property type="term" value="P:mitochondrial protein processing"/>
    <property type="evidence" value="ECO:0000250"/>
    <property type="project" value="UniProtKB"/>
</dbReference>
<dbReference type="GO" id="GO:0033108">
    <property type="term" value="P:mitochondrial respiratory chain complex assembly"/>
    <property type="evidence" value="ECO:0000315"/>
    <property type="project" value="UniProtKB"/>
</dbReference>
<dbReference type="GO" id="GO:0010637">
    <property type="term" value="P:negative regulation of mitochondrial fusion"/>
    <property type="evidence" value="ECO:0000250"/>
    <property type="project" value="UniProtKB"/>
</dbReference>
<dbReference type="GO" id="GO:0043065">
    <property type="term" value="P:positive regulation of apoptotic process"/>
    <property type="evidence" value="ECO:0000250"/>
    <property type="project" value="UniProtKB"/>
</dbReference>
<dbReference type="GO" id="GO:0016540">
    <property type="term" value="P:protein autoprocessing"/>
    <property type="evidence" value="ECO:0000250"/>
    <property type="project" value="UniProtKB"/>
</dbReference>
<dbReference type="GO" id="GO:0006515">
    <property type="term" value="P:protein quality control for misfolded or incompletely synthesized proteins"/>
    <property type="evidence" value="ECO:0000250"/>
    <property type="project" value="UniProtKB"/>
</dbReference>
<dbReference type="GO" id="GO:1903850">
    <property type="term" value="P:regulation of cristae formation"/>
    <property type="evidence" value="ECO:0000250"/>
    <property type="project" value="UniProtKB"/>
</dbReference>
<dbReference type="GO" id="GO:0031638">
    <property type="term" value="P:zymogen activation"/>
    <property type="evidence" value="ECO:0000250"/>
    <property type="project" value="UniProtKB"/>
</dbReference>
<dbReference type="CDD" id="cd07331">
    <property type="entry name" value="M48C_Oma1_like"/>
    <property type="match status" value="1"/>
</dbReference>
<dbReference type="Gene3D" id="3.30.2010.10">
    <property type="entry name" value="Metalloproteases ('zincins'), catalytic domain"/>
    <property type="match status" value="1"/>
</dbReference>
<dbReference type="InterPro" id="IPR051156">
    <property type="entry name" value="Mito/Outer_Membr_Metalloprot"/>
</dbReference>
<dbReference type="InterPro" id="IPR001915">
    <property type="entry name" value="Peptidase_M48"/>
</dbReference>
<dbReference type="PANTHER" id="PTHR22726">
    <property type="entry name" value="METALLOENDOPEPTIDASE OMA1"/>
    <property type="match status" value="1"/>
</dbReference>
<dbReference type="PANTHER" id="PTHR22726:SF1">
    <property type="entry name" value="METALLOENDOPEPTIDASE OMA1, MITOCHONDRIAL"/>
    <property type="match status" value="1"/>
</dbReference>
<dbReference type="Pfam" id="PF01435">
    <property type="entry name" value="Peptidase_M48"/>
    <property type="match status" value="1"/>
</dbReference>
<dbReference type="PROSITE" id="PS00142">
    <property type="entry name" value="ZINC_PROTEASE"/>
    <property type="match status" value="1"/>
</dbReference>
<feature type="transit peptide" description="Mitochondrion" evidence="5">
    <location>
        <begin position="1"/>
        <end status="unknown"/>
    </location>
</feature>
<feature type="propeptide" id="PRO_0000450319" evidence="4">
    <location>
        <begin status="unknown"/>
        <end position="111"/>
    </location>
</feature>
<feature type="chain" id="PRO_0000417520" description="Metalloendopeptidase OMA1, mitochondrial">
    <location>
        <begin position="112"/>
        <end status="unknown"/>
    </location>
</feature>
<feature type="propeptide" id="PRO_0000450320" evidence="4">
    <location>
        <begin status="unknown"/>
        <end position="478"/>
    </location>
</feature>
<feature type="topological domain" description="Mitochondrial matrix" evidence="4">
    <location>
        <begin status="unknown"/>
        <end position="162"/>
    </location>
</feature>
<feature type="transmembrane region" description="Helical" evidence="5">
    <location>
        <begin position="163"/>
        <end position="183"/>
    </location>
</feature>
<feature type="topological domain" description="Mitochondrial intermembrane" evidence="4">
    <location>
        <begin position="184"/>
        <end status="unknown"/>
    </location>
</feature>
<feature type="region of interest" description="Stress-sensor region" evidence="4">
    <location>
        <begin position="134"/>
        <end position="164"/>
    </location>
</feature>
<feature type="active site" evidence="6">
    <location>
        <position position="297"/>
    </location>
</feature>
<feature type="binding site" evidence="6">
    <location>
        <position position="296"/>
    </location>
    <ligand>
        <name>Zn(2+)</name>
        <dbReference type="ChEBI" id="CHEBI:29105"/>
        <note>catalytic</note>
    </ligand>
</feature>
<feature type="binding site" evidence="6">
    <location>
        <position position="300"/>
    </location>
    <ligand>
        <name>Zn(2+)</name>
        <dbReference type="ChEBI" id="CHEBI:29105"/>
        <note>catalytic</note>
    </ligand>
</feature>
<feature type="binding site" evidence="6">
    <location>
        <position position="361"/>
    </location>
    <ligand>
        <name>Zn(2+)</name>
        <dbReference type="ChEBI" id="CHEBI:29105"/>
        <note>catalytic</note>
    </ligand>
</feature>
<feature type="disulfide bond" evidence="2">
    <location>
        <begin position="376"/>
        <end position="434"/>
    </location>
</feature>
<keyword id="KW-0068">Autocatalytic cleavage</keyword>
<keyword id="KW-1015">Disulfide bond</keyword>
<keyword id="KW-0378">Hydrolase</keyword>
<keyword id="KW-0472">Membrane</keyword>
<keyword id="KW-0479">Metal-binding</keyword>
<keyword id="KW-0482">Metalloprotease</keyword>
<keyword id="KW-0496">Mitochondrion</keyword>
<keyword id="KW-0999">Mitochondrion inner membrane</keyword>
<keyword id="KW-0645">Protease</keyword>
<keyword id="KW-1185">Reference proteome</keyword>
<keyword id="KW-0809">Transit peptide</keyword>
<keyword id="KW-0812">Transmembrane</keyword>
<keyword id="KW-1133">Transmembrane helix</keyword>
<keyword id="KW-0862">Zinc</keyword>
<keyword id="KW-0865">Zymogen</keyword>
<evidence type="ECO:0000250" key="1">
    <source>
        <dbReference type="UniProtKB" id="O75844"/>
    </source>
</evidence>
<evidence type="ECO:0000250" key="2">
    <source>
        <dbReference type="UniProtKB" id="P36163"/>
    </source>
</evidence>
<evidence type="ECO:0000250" key="3">
    <source>
        <dbReference type="UniProtKB" id="Q96E52"/>
    </source>
</evidence>
<evidence type="ECO:0000250" key="4">
    <source>
        <dbReference type="UniProtKB" id="Q9D8H7"/>
    </source>
</evidence>
<evidence type="ECO:0000255" key="5"/>
<evidence type="ECO:0000255" key="6">
    <source>
        <dbReference type="PROSITE-ProRule" id="PRU10095"/>
    </source>
</evidence>
<evidence type="ECO:0000269" key="7">
    <source>
    </source>
</evidence>
<evidence type="ECO:0000303" key="8">
    <source>
    </source>
</evidence>
<evidence type="ECO:0000303" key="9">
    <source>
    </source>
</evidence>
<evidence type="ECO:0000305" key="10"/>